<sequence length="63" mass="7001">TKSVVANQLIPINTALTLVMMKAEEVSPKGIPAEEIPRLVGMQVNRAVYLDETLMPDMVKNYE</sequence>
<reference key="1">
    <citation type="journal article" date="1989" name="Biochim. Biophys. Acta">
        <title>Structures of antifreeze peptides from the antarctic eel pout, Austrolycicthys brachycephalus.</title>
        <authorList>
            <person name="Cheng C.-H.C."/>
            <person name="Devries A.L."/>
        </authorList>
    </citation>
    <scope>PROTEIN SEQUENCE</scope>
    <scope>SUBCELLULAR LOCATION</scope>
    <scope>TISSUE SPECIFICITY</scope>
</reference>
<comment type="function">
    <text evidence="1">Contributes to protect fish blood from freezing at subzero sea water temperatures. Lowers the blood freezing point. Binds to nascent ice crystals and prevents further growth (By similarity).</text>
</comment>
<comment type="subcellular location">
    <subcellularLocation>
        <location evidence="3">Secreted</location>
    </subcellularLocation>
</comment>
<comment type="tissue specificity">
    <text evidence="3">Detected in blood serum (at protein level).</text>
</comment>
<comment type="similarity">
    <text evidence="4">Belongs to the type-III AFP family.</text>
</comment>
<evidence type="ECO:0000250" key="1"/>
<evidence type="ECO:0000255" key="2">
    <source>
        <dbReference type="PROSITE-ProRule" id="PRU00021"/>
    </source>
</evidence>
<evidence type="ECO:0000269" key="3">
    <source>
    </source>
</evidence>
<evidence type="ECO:0000305" key="4"/>
<name>ANP2_PACBR</name>
<proteinExistence type="evidence at protein level"/>
<accession>P12101</accession>
<organism>
    <name type="scientific">Pachycara brachycephalum</name>
    <name type="common">Antarctic eelpout</name>
    <name type="synonym">Austrolycichthys brachycephalus</name>
    <dbReference type="NCBI Taxonomy" id="36221"/>
    <lineage>
        <taxon>Eukaryota</taxon>
        <taxon>Metazoa</taxon>
        <taxon>Chordata</taxon>
        <taxon>Craniata</taxon>
        <taxon>Vertebrata</taxon>
        <taxon>Euteleostomi</taxon>
        <taxon>Actinopterygii</taxon>
        <taxon>Neopterygii</taxon>
        <taxon>Teleostei</taxon>
        <taxon>Neoteleostei</taxon>
        <taxon>Acanthomorphata</taxon>
        <taxon>Eupercaria</taxon>
        <taxon>Perciformes</taxon>
        <taxon>Cottioidei</taxon>
        <taxon>Zoarcales</taxon>
        <taxon>Zoarcidae</taxon>
        <taxon>Lycodinae</taxon>
        <taxon>Pachycara</taxon>
    </lineage>
</organism>
<keyword id="KW-0047">Antifreeze protein</keyword>
<keyword id="KW-0903">Direct protein sequencing</keyword>
<keyword id="KW-0964">Secreted</keyword>
<dbReference type="PIR" id="S04974">
    <property type="entry name" value="S04974"/>
</dbReference>
<dbReference type="SMR" id="P12101"/>
<dbReference type="GO" id="GO:0005576">
    <property type="term" value="C:extracellular region"/>
    <property type="evidence" value="ECO:0007669"/>
    <property type="project" value="UniProtKB-SubCell"/>
</dbReference>
<dbReference type="CDD" id="cd11617">
    <property type="entry name" value="Antifreeze_III"/>
    <property type="match status" value="1"/>
</dbReference>
<dbReference type="Gene3D" id="3.90.1210.10">
    <property type="entry name" value="Antifreeze-like/N-acetylneuraminic acid synthase C-terminal domain"/>
    <property type="match status" value="1"/>
</dbReference>
<dbReference type="InterPro" id="IPR006190">
    <property type="entry name" value="AFP_Neu5c_C"/>
</dbReference>
<dbReference type="InterPro" id="IPR036732">
    <property type="entry name" value="AFP_Neu5c_C_sf"/>
</dbReference>
<dbReference type="InterPro" id="IPR006013">
    <property type="entry name" value="Antifreeze_III"/>
</dbReference>
<dbReference type="InterPro" id="IPR013974">
    <property type="entry name" value="SAF"/>
</dbReference>
<dbReference type="Pfam" id="PF08666">
    <property type="entry name" value="SAF"/>
    <property type="match status" value="1"/>
</dbReference>
<dbReference type="PRINTS" id="PR00357">
    <property type="entry name" value="ANTIFREEZIII"/>
</dbReference>
<dbReference type="SUPFAM" id="SSF51269">
    <property type="entry name" value="AFP III-like domain"/>
    <property type="match status" value="1"/>
</dbReference>
<dbReference type="PROSITE" id="PS50844">
    <property type="entry name" value="AFP_LIKE"/>
    <property type="match status" value="1"/>
</dbReference>
<feature type="chain" id="PRO_0000155150" description="Ice-structuring protein AB2">
    <location>
        <begin position="1"/>
        <end position="63"/>
    </location>
</feature>
<feature type="domain" description="AFP-like" evidence="2">
    <location>
        <begin position="3"/>
        <end position="62"/>
    </location>
</feature>
<feature type="site" description="Important for ice-binding" evidence="1">
    <location>
        <position position="8"/>
    </location>
</feature>
<feature type="site" description="Important for ice-binding" evidence="1">
    <location>
        <position position="13"/>
    </location>
</feature>
<feature type="site" description="Important for ice-binding" evidence="1">
    <location>
        <position position="17"/>
    </location>
</feature>
<feature type="site" description="Important for ice-binding" evidence="1">
    <location>
        <position position="43"/>
    </location>
</feature>
<protein>
    <recommendedName>
        <fullName>Ice-structuring protein AB2</fullName>
        <shortName>ISP AB2</shortName>
    </recommendedName>
    <alternativeName>
        <fullName>Antifreeze peptide AB2</fullName>
    </alternativeName>
</protein>